<keyword id="KW-1185">Reference proteome</keyword>
<keyword id="KW-0687">Ribonucleoprotein</keyword>
<keyword id="KW-0689">Ribosomal protein</keyword>
<keyword id="KW-0694">RNA-binding</keyword>
<keyword id="KW-0699">rRNA-binding</keyword>
<evidence type="ECO:0000255" key="1">
    <source>
        <dbReference type="HAMAP-Rule" id="MF_00531"/>
    </source>
</evidence>
<evidence type="ECO:0000305" key="2"/>
<comment type="function">
    <text evidence="1">Protein S19 forms a complex with S13 that binds strongly to the 16S ribosomal RNA.</text>
</comment>
<comment type="similarity">
    <text evidence="1">Belongs to the universal ribosomal protein uS19 family.</text>
</comment>
<feature type="chain" id="PRO_1000127959" description="Small ribosomal subunit protein uS19">
    <location>
        <begin position="1"/>
        <end position="92"/>
    </location>
</feature>
<dbReference type="EMBL" id="CP001291">
    <property type="protein sequence ID" value="ACK72088.1"/>
    <property type="molecule type" value="Genomic_DNA"/>
</dbReference>
<dbReference type="RefSeq" id="WP_015955681.1">
    <property type="nucleotide sequence ID" value="NC_011729.1"/>
</dbReference>
<dbReference type="SMR" id="B7KHZ1"/>
<dbReference type="STRING" id="65393.PCC7424_3707"/>
<dbReference type="KEGG" id="cyc:PCC7424_3707"/>
<dbReference type="eggNOG" id="COG0185">
    <property type="taxonomic scope" value="Bacteria"/>
</dbReference>
<dbReference type="HOGENOM" id="CLU_144911_0_1_3"/>
<dbReference type="OrthoDB" id="9797833at2"/>
<dbReference type="Proteomes" id="UP000002384">
    <property type="component" value="Chromosome"/>
</dbReference>
<dbReference type="GO" id="GO:0005737">
    <property type="term" value="C:cytoplasm"/>
    <property type="evidence" value="ECO:0007669"/>
    <property type="project" value="UniProtKB-ARBA"/>
</dbReference>
<dbReference type="GO" id="GO:0015935">
    <property type="term" value="C:small ribosomal subunit"/>
    <property type="evidence" value="ECO:0007669"/>
    <property type="project" value="InterPro"/>
</dbReference>
<dbReference type="GO" id="GO:0019843">
    <property type="term" value="F:rRNA binding"/>
    <property type="evidence" value="ECO:0007669"/>
    <property type="project" value="UniProtKB-UniRule"/>
</dbReference>
<dbReference type="GO" id="GO:0003735">
    <property type="term" value="F:structural constituent of ribosome"/>
    <property type="evidence" value="ECO:0007669"/>
    <property type="project" value="InterPro"/>
</dbReference>
<dbReference type="GO" id="GO:0000028">
    <property type="term" value="P:ribosomal small subunit assembly"/>
    <property type="evidence" value="ECO:0007669"/>
    <property type="project" value="TreeGrafter"/>
</dbReference>
<dbReference type="GO" id="GO:0006412">
    <property type="term" value="P:translation"/>
    <property type="evidence" value="ECO:0007669"/>
    <property type="project" value="UniProtKB-UniRule"/>
</dbReference>
<dbReference type="FunFam" id="3.30.860.10:FF:000001">
    <property type="entry name" value="30S ribosomal protein S19"/>
    <property type="match status" value="1"/>
</dbReference>
<dbReference type="Gene3D" id="3.30.860.10">
    <property type="entry name" value="30s Ribosomal Protein S19, Chain A"/>
    <property type="match status" value="1"/>
</dbReference>
<dbReference type="HAMAP" id="MF_00531">
    <property type="entry name" value="Ribosomal_uS19"/>
    <property type="match status" value="1"/>
</dbReference>
<dbReference type="InterPro" id="IPR002222">
    <property type="entry name" value="Ribosomal_uS19"/>
</dbReference>
<dbReference type="InterPro" id="IPR005732">
    <property type="entry name" value="Ribosomal_uS19_bac-type"/>
</dbReference>
<dbReference type="InterPro" id="IPR020934">
    <property type="entry name" value="Ribosomal_uS19_CS"/>
</dbReference>
<dbReference type="InterPro" id="IPR023575">
    <property type="entry name" value="Ribosomal_uS19_SF"/>
</dbReference>
<dbReference type="NCBIfam" id="TIGR01050">
    <property type="entry name" value="rpsS_bact"/>
    <property type="match status" value="1"/>
</dbReference>
<dbReference type="PANTHER" id="PTHR11880">
    <property type="entry name" value="RIBOSOMAL PROTEIN S19P FAMILY MEMBER"/>
    <property type="match status" value="1"/>
</dbReference>
<dbReference type="PANTHER" id="PTHR11880:SF8">
    <property type="entry name" value="SMALL RIBOSOMAL SUBUNIT PROTEIN US19M"/>
    <property type="match status" value="1"/>
</dbReference>
<dbReference type="Pfam" id="PF00203">
    <property type="entry name" value="Ribosomal_S19"/>
    <property type="match status" value="1"/>
</dbReference>
<dbReference type="PIRSF" id="PIRSF002144">
    <property type="entry name" value="Ribosomal_S19"/>
    <property type="match status" value="1"/>
</dbReference>
<dbReference type="PRINTS" id="PR00975">
    <property type="entry name" value="RIBOSOMALS19"/>
</dbReference>
<dbReference type="SUPFAM" id="SSF54570">
    <property type="entry name" value="Ribosomal protein S19"/>
    <property type="match status" value="1"/>
</dbReference>
<dbReference type="PROSITE" id="PS00323">
    <property type="entry name" value="RIBOSOMAL_S19"/>
    <property type="match status" value="1"/>
</dbReference>
<proteinExistence type="inferred from homology"/>
<organism>
    <name type="scientific">Gloeothece citriformis (strain PCC 7424)</name>
    <name type="common">Cyanothece sp. (strain PCC 7424)</name>
    <dbReference type="NCBI Taxonomy" id="65393"/>
    <lineage>
        <taxon>Bacteria</taxon>
        <taxon>Bacillati</taxon>
        <taxon>Cyanobacteriota</taxon>
        <taxon>Cyanophyceae</taxon>
        <taxon>Oscillatoriophycideae</taxon>
        <taxon>Chroococcales</taxon>
        <taxon>Aphanothecaceae</taxon>
        <taxon>Gloeothece</taxon>
        <taxon>Gloeothece citriformis</taxon>
    </lineage>
</organism>
<reference key="1">
    <citation type="journal article" date="2011" name="MBio">
        <title>Novel metabolic attributes of the genus Cyanothece, comprising a group of unicellular nitrogen-fixing Cyanobacteria.</title>
        <authorList>
            <person name="Bandyopadhyay A."/>
            <person name="Elvitigala T."/>
            <person name="Welsh E."/>
            <person name="Stockel J."/>
            <person name="Liberton M."/>
            <person name="Min H."/>
            <person name="Sherman L.A."/>
            <person name="Pakrasi H.B."/>
        </authorList>
    </citation>
    <scope>NUCLEOTIDE SEQUENCE [LARGE SCALE GENOMIC DNA]</scope>
    <source>
        <strain>PCC 7424</strain>
    </source>
</reference>
<sequence length="92" mass="10354">MARSLKKGPFVADHLLSKIEKLNEKGEKQVIKTWSRASTIIPDMVGHTIAVHNGKQHVPIFISEQMVGHKLGEFAPTRTFRGHAKSDKKARR</sequence>
<name>RS19_GLOC7</name>
<gene>
    <name evidence="1" type="primary">rpsS</name>
    <name evidence="1" type="synonym">rps19</name>
    <name type="ordered locus">PCC7424_3707</name>
</gene>
<protein>
    <recommendedName>
        <fullName evidence="1">Small ribosomal subunit protein uS19</fullName>
    </recommendedName>
    <alternativeName>
        <fullName evidence="2">30S ribosomal protein S19</fullName>
    </alternativeName>
</protein>
<accession>B7KHZ1</accession>